<reference key="1">
    <citation type="submission" date="2005-08" db="EMBL/GenBank/DDBJ databases">
        <title>Complete sequence of Pelodictyon luteolum DSM 273.</title>
        <authorList>
            <consortium name="US DOE Joint Genome Institute"/>
            <person name="Copeland A."/>
            <person name="Lucas S."/>
            <person name="Lapidus A."/>
            <person name="Barry K."/>
            <person name="Detter J.C."/>
            <person name="Glavina T."/>
            <person name="Hammon N."/>
            <person name="Israni S."/>
            <person name="Pitluck S."/>
            <person name="Bryant D."/>
            <person name="Schmutz J."/>
            <person name="Larimer F."/>
            <person name="Land M."/>
            <person name="Kyrpides N."/>
            <person name="Ivanova N."/>
            <person name="Richardson P."/>
        </authorList>
    </citation>
    <scope>NUCLEOTIDE SEQUENCE [LARGE SCALE GENOMIC DNA]</scope>
    <source>
        <strain>DSM 273 / BCRC 81028 / 2530</strain>
    </source>
</reference>
<comment type="function">
    <text evidence="1">Catalyzes the reversible adenylation of nicotinate mononucleotide (NaMN) to nicotinic acid adenine dinucleotide (NaAD).</text>
</comment>
<comment type="catalytic activity">
    <reaction evidence="1">
        <text>nicotinate beta-D-ribonucleotide + ATP + H(+) = deamido-NAD(+) + diphosphate</text>
        <dbReference type="Rhea" id="RHEA:22860"/>
        <dbReference type="ChEBI" id="CHEBI:15378"/>
        <dbReference type="ChEBI" id="CHEBI:30616"/>
        <dbReference type="ChEBI" id="CHEBI:33019"/>
        <dbReference type="ChEBI" id="CHEBI:57502"/>
        <dbReference type="ChEBI" id="CHEBI:58437"/>
        <dbReference type="EC" id="2.7.7.18"/>
    </reaction>
</comment>
<comment type="pathway">
    <text evidence="1">Cofactor biosynthesis; NAD(+) biosynthesis; deamido-NAD(+) from nicotinate D-ribonucleotide: step 1/1.</text>
</comment>
<comment type="similarity">
    <text evidence="1">Belongs to the NadD family.</text>
</comment>
<name>NADD_CHLL3</name>
<proteinExistence type="inferred from homology"/>
<keyword id="KW-0067">ATP-binding</keyword>
<keyword id="KW-0520">NAD</keyword>
<keyword id="KW-0547">Nucleotide-binding</keyword>
<keyword id="KW-0548">Nucleotidyltransferase</keyword>
<keyword id="KW-0662">Pyridine nucleotide biosynthesis</keyword>
<keyword id="KW-1185">Reference proteome</keyword>
<keyword id="KW-0808">Transferase</keyword>
<sequence>MHLAVFGGTFDPPHNGHLAMALFARELLPADRILISVSDNPLKPACGASDRQRLDMAELLSLEINRTGMNAEVTGWELQQPRPSYTVDLLRFVRSSHPDANLTLIVGEDSYQDFPRWRDPEGIFALADVAVFRRRGEDESDEIAGDSRVRCIAFDAPVSSTMVREFSATGKSLRGLVPETVMQYILSEGLYREA</sequence>
<accession>Q3B146</accession>
<feature type="chain" id="PRO_1000058994" description="Probable nicotinate-nucleotide adenylyltransferase">
    <location>
        <begin position="1"/>
        <end position="194"/>
    </location>
</feature>
<protein>
    <recommendedName>
        <fullName evidence="1">Probable nicotinate-nucleotide adenylyltransferase</fullName>
        <ecNumber evidence="1">2.7.7.18</ecNumber>
    </recommendedName>
    <alternativeName>
        <fullName evidence="1">Deamido-NAD(+) diphosphorylase</fullName>
    </alternativeName>
    <alternativeName>
        <fullName evidence="1">Deamido-NAD(+) pyrophosphorylase</fullName>
    </alternativeName>
    <alternativeName>
        <fullName evidence="1">Nicotinate mononucleotide adenylyltransferase</fullName>
        <shortName evidence="1">NaMN adenylyltransferase</shortName>
    </alternativeName>
</protein>
<gene>
    <name evidence="1" type="primary">nadD</name>
    <name type="ordered locus">Plut_2093</name>
</gene>
<organism>
    <name type="scientific">Chlorobium luteolum (strain DSM 273 / BCRC 81028 / 2530)</name>
    <name type="common">Pelodictyon luteolum</name>
    <dbReference type="NCBI Taxonomy" id="319225"/>
    <lineage>
        <taxon>Bacteria</taxon>
        <taxon>Pseudomonadati</taxon>
        <taxon>Chlorobiota</taxon>
        <taxon>Chlorobiia</taxon>
        <taxon>Chlorobiales</taxon>
        <taxon>Chlorobiaceae</taxon>
        <taxon>Chlorobium/Pelodictyon group</taxon>
        <taxon>Pelodictyon</taxon>
    </lineage>
</organism>
<dbReference type="EC" id="2.7.7.18" evidence="1"/>
<dbReference type="EMBL" id="CP000096">
    <property type="protein sequence ID" value="ABB24935.1"/>
    <property type="molecule type" value="Genomic_DNA"/>
</dbReference>
<dbReference type="RefSeq" id="WP_011358805.1">
    <property type="nucleotide sequence ID" value="NC_007512.1"/>
</dbReference>
<dbReference type="SMR" id="Q3B146"/>
<dbReference type="STRING" id="319225.Plut_2093"/>
<dbReference type="KEGG" id="plt:Plut_2093"/>
<dbReference type="eggNOG" id="COG1057">
    <property type="taxonomic scope" value="Bacteria"/>
</dbReference>
<dbReference type="HOGENOM" id="CLU_069765_3_2_10"/>
<dbReference type="OrthoDB" id="5295945at2"/>
<dbReference type="UniPathway" id="UPA00253">
    <property type="reaction ID" value="UER00332"/>
</dbReference>
<dbReference type="Proteomes" id="UP000002709">
    <property type="component" value="Chromosome"/>
</dbReference>
<dbReference type="GO" id="GO:0005524">
    <property type="term" value="F:ATP binding"/>
    <property type="evidence" value="ECO:0007669"/>
    <property type="project" value="UniProtKB-KW"/>
</dbReference>
<dbReference type="GO" id="GO:0004515">
    <property type="term" value="F:nicotinate-nucleotide adenylyltransferase activity"/>
    <property type="evidence" value="ECO:0007669"/>
    <property type="project" value="UniProtKB-UniRule"/>
</dbReference>
<dbReference type="GO" id="GO:0009435">
    <property type="term" value="P:NAD biosynthetic process"/>
    <property type="evidence" value="ECO:0007669"/>
    <property type="project" value="UniProtKB-UniRule"/>
</dbReference>
<dbReference type="CDD" id="cd02165">
    <property type="entry name" value="NMNAT"/>
    <property type="match status" value="1"/>
</dbReference>
<dbReference type="Gene3D" id="3.40.50.620">
    <property type="entry name" value="HUPs"/>
    <property type="match status" value="1"/>
</dbReference>
<dbReference type="HAMAP" id="MF_00244">
    <property type="entry name" value="NaMN_adenylyltr"/>
    <property type="match status" value="1"/>
</dbReference>
<dbReference type="InterPro" id="IPR004821">
    <property type="entry name" value="Cyt_trans-like"/>
</dbReference>
<dbReference type="InterPro" id="IPR005248">
    <property type="entry name" value="NadD/NMNAT"/>
</dbReference>
<dbReference type="InterPro" id="IPR014729">
    <property type="entry name" value="Rossmann-like_a/b/a_fold"/>
</dbReference>
<dbReference type="NCBIfam" id="TIGR00125">
    <property type="entry name" value="cyt_tran_rel"/>
    <property type="match status" value="1"/>
</dbReference>
<dbReference type="NCBIfam" id="TIGR00482">
    <property type="entry name" value="nicotinate (nicotinamide) nucleotide adenylyltransferase"/>
    <property type="match status" value="1"/>
</dbReference>
<dbReference type="PANTHER" id="PTHR39321">
    <property type="entry name" value="NICOTINATE-NUCLEOTIDE ADENYLYLTRANSFERASE-RELATED"/>
    <property type="match status" value="1"/>
</dbReference>
<dbReference type="PANTHER" id="PTHR39321:SF3">
    <property type="entry name" value="PHOSPHOPANTETHEINE ADENYLYLTRANSFERASE"/>
    <property type="match status" value="1"/>
</dbReference>
<dbReference type="Pfam" id="PF01467">
    <property type="entry name" value="CTP_transf_like"/>
    <property type="match status" value="1"/>
</dbReference>
<dbReference type="SUPFAM" id="SSF52374">
    <property type="entry name" value="Nucleotidylyl transferase"/>
    <property type="match status" value="1"/>
</dbReference>
<evidence type="ECO:0000255" key="1">
    <source>
        <dbReference type="HAMAP-Rule" id="MF_00244"/>
    </source>
</evidence>